<dbReference type="EC" id="2.7.10.1"/>
<dbReference type="EMBL" id="X76885">
    <property type="protein sequence ID" value="CAA54213.1"/>
    <property type="molecule type" value="mRNA"/>
</dbReference>
<dbReference type="PIR" id="I50128">
    <property type="entry name" value="I50128"/>
</dbReference>
<dbReference type="SMR" id="Q90330"/>
<dbReference type="GlyCosmos" id="Q90330">
    <property type="glycosylation" value="5 sites, No reported glycans"/>
</dbReference>
<dbReference type="GO" id="GO:0005783">
    <property type="term" value="C:endoplasmic reticulum"/>
    <property type="evidence" value="ECO:0007669"/>
    <property type="project" value="UniProtKB-SubCell"/>
</dbReference>
<dbReference type="GO" id="GO:0005768">
    <property type="term" value="C:endosome"/>
    <property type="evidence" value="ECO:0007669"/>
    <property type="project" value="UniProtKB-SubCell"/>
</dbReference>
<dbReference type="GO" id="GO:0005886">
    <property type="term" value="C:plasma membrane"/>
    <property type="evidence" value="ECO:0007669"/>
    <property type="project" value="UniProtKB-SubCell"/>
</dbReference>
<dbReference type="GO" id="GO:0043235">
    <property type="term" value="C:receptor complex"/>
    <property type="evidence" value="ECO:0007669"/>
    <property type="project" value="TreeGrafter"/>
</dbReference>
<dbReference type="GO" id="GO:0005524">
    <property type="term" value="F:ATP binding"/>
    <property type="evidence" value="ECO:0007669"/>
    <property type="project" value="UniProtKB-KW"/>
</dbReference>
<dbReference type="GO" id="GO:0017134">
    <property type="term" value="F:fibroblast growth factor binding"/>
    <property type="evidence" value="ECO:0007669"/>
    <property type="project" value="TreeGrafter"/>
</dbReference>
<dbReference type="GO" id="GO:0005007">
    <property type="term" value="F:fibroblast growth factor receptor activity"/>
    <property type="evidence" value="ECO:0007669"/>
    <property type="project" value="InterPro"/>
</dbReference>
<dbReference type="GO" id="GO:0008284">
    <property type="term" value="P:positive regulation of cell population proliferation"/>
    <property type="evidence" value="ECO:0007669"/>
    <property type="project" value="InterPro"/>
</dbReference>
<dbReference type="GO" id="GO:0070374">
    <property type="term" value="P:positive regulation of ERK1 and ERK2 cascade"/>
    <property type="evidence" value="ECO:0007669"/>
    <property type="project" value="TreeGrafter"/>
</dbReference>
<dbReference type="GO" id="GO:0070857">
    <property type="term" value="P:regulation of bile acid biosynthetic process"/>
    <property type="evidence" value="ECO:0007669"/>
    <property type="project" value="TreeGrafter"/>
</dbReference>
<dbReference type="CDD" id="cd05857">
    <property type="entry name" value="IgI_2_FGFR"/>
    <property type="match status" value="1"/>
</dbReference>
<dbReference type="CDD" id="cd05099">
    <property type="entry name" value="PTKc_FGFR4"/>
    <property type="match status" value="1"/>
</dbReference>
<dbReference type="FunFam" id="1.10.510.10:FF:000007">
    <property type="entry name" value="Fibroblast growth factor receptor"/>
    <property type="match status" value="1"/>
</dbReference>
<dbReference type="FunFam" id="2.60.40.10:FF:000016">
    <property type="entry name" value="Fibroblast growth factor receptor"/>
    <property type="match status" value="1"/>
</dbReference>
<dbReference type="FunFam" id="2.60.40.10:FF:000020">
    <property type="entry name" value="Fibroblast growth factor receptor"/>
    <property type="match status" value="1"/>
</dbReference>
<dbReference type="FunFam" id="3.30.200.20:FF:000011">
    <property type="entry name" value="Fibroblast growth factor receptor"/>
    <property type="match status" value="1"/>
</dbReference>
<dbReference type="Gene3D" id="2.60.40.10">
    <property type="entry name" value="Immunoglobulins"/>
    <property type="match status" value="2"/>
</dbReference>
<dbReference type="Gene3D" id="3.30.200.20">
    <property type="entry name" value="Phosphorylase Kinase, domain 1"/>
    <property type="match status" value="1"/>
</dbReference>
<dbReference type="Gene3D" id="1.10.510.10">
    <property type="entry name" value="Transferase(Phosphotransferase) domain 1"/>
    <property type="match status" value="1"/>
</dbReference>
<dbReference type="InterPro" id="IPR016248">
    <property type="entry name" value="FGF_rcpt_fam"/>
</dbReference>
<dbReference type="InterPro" id="IPR007110">
    <property type="entry name" value="Ig-like_dom"/>
</dbReference>
<dbReference type="InterPro" id="IPR036179">
    <property type="entry name" value="Ig-like_dom_sf"/>
</dbReference>
<dbReference type="InterPro" id="IPR013783">
    <property type="entry name" value="Ig-like_fold"/>
</dbReference>
<dbReference type="InterPro" id="IPR013098">
    <property type="entry name" value="Ig_I-set"/>
</dbReference>
<dbReference type="InterPro" id="IPR003599">
    <property type="entry name" value="Ig_sub"/>
</dbReference>
<dbReference type="InterPro" id="IPR003598">
    <property type="entry name" value="Ig_sub2"/>
</dbReference>
<dbReference type="InterPro" id="IPR011009">
    <property type="entry name" value="Kinase-like_dom_sf"/>
</dbReference>
<dbReference type="InterPro" id="IPR000719">
    <property type="entry name" value="Prot_kinase_dom"/>
</dbReference>
<dbReference type="InterPro" id="IPR017441">
    <property type="entry name" value="Protein_kinase_ATP_BS"/>
</dbReference>
<dbReference type="InterPro" id="IPR050122">
    <property type="entry name" value="RTK"/>
</dbReference>
<dbReference type="InterPro" id="IPR001245">
    <property type="entry name" value="Ser-Thr/Tyr_kinase_cat_dom"/>
</dbReference>
<dbReference type="InterPro" id="IPR008266">
    <property type="entry name" value="Tyr_kinase_AS"/>
</dbReference>
<dbReference type="InterPro" id="IPR020635">
    <property type="entry name" value="Tyr_kinase_cat_dom"/>
</dbReference>
<dbReference type="PANTHER" id="PTHR24416:SF343">
    <property type="entry name" value="FIBROBLAST GROWTH FACTOR RECEPTOR 4"/>
    <property type="match status" value="1"/>
</dbReference>
<dbReference type="PANTHER" id="PTHR24416">
    <property type="entry name" value="TYROSINE-PROTEIN KINASE RECEPTOR"/>
    <property type="match status" value="1"/>
</dbReference>
<dbReference type="Pfam" id="PF07679">
    <property type="entry name" value="I-set"/>
    <property type="match status" value="1"/>
</dbReference>
<dbReference type="Pfam" id="PF13927">
    <property type="entry name" value="Ig_3"/>
    <property type="match status" value="1"/>
</dbReference>
<dbReference type="Pfam" id="PF07714">
    <property type="entry name" value="PK_Tyr_Ser-Thr"/>
    <property type="match status" value="1"/>
</dbReference>
<dbReference type="PIRSF" id="PIRSF000628">
    <property type="entry name" value="FGFR"/>
    <property type="match status" value="1"/>
</dbReference>
<dbReference type="PRINTS" id="PR00109">
    <property type="entry name" value="TYRKINASE"/>
</dbReference>
<dbReference type="SMART" id="SM00409">
    <property type="entry name" value="IG"/>
    <property type="match status" value="2"/>
</dbReference>
<dbReference type="SMART" id="SM00408">
    <property type="entry name" value="IGc2"/>
    <property type="match status" value="2"/>
</dbReference>
<dbReference type="SMART" id="SM00219">
    <property type="entry name" value="TyrKc"/>
    <property type="match status" value="1"/>
</dbReference>
<dbReference type="SUPFAM" id="SSF48726">
    <property type="entry name" value="Immunoglobulin"/>
    <property type="match status" value="2"/>
</dbReference>
<dbReference type="SUPFAM" id="SSF56112">
    <property type="entry name" value="Protein kinase-like (PK-like)"/>
    <property type="match status" value="1"/>
</dbReference>
<dbReference type="PROSITE" id="PS50835">
    <property type="entry name" value="IG_LIKE"/>
    <property type="match status" value="2"/>
</dbReference>
<dbReference type="PROSITE" id="PS00107">
    <property type="entry name" value="PROTEIN_KINASE_ATP"/>
    <property type="match status" value="1"/>
</dbReference>
<dbReference type="PROSITE" id="PS50011">
    <property type="entry name" value="PROTEIN_KINASE_DOM"/>
    <property type="match status" value="1"/>
</dbReference>
<dbReference type="PROSITE" id="PS00109">
    <property type="entry name" value="PROTEIN_KINASE_TYR"/>
    <property type="match status" value="1"/>
</dbReference>
<reference key="1">
    <citation type="journal article" date="1994" name="Development">
        <title>Distinct developmental expression of a new avian fibroblast growth factor receptor.</title>
        <authorList>
            <person name="Marcelle C."/>
            <person name="Eichmann A."/>
            <person name="Halevy O."/>
            <person name="Breant C."/>
            <person name="Le Douarin N.M."/>
        </authorList>
    </citation>
    <scope>NUCLEOTIDE SEQUENCE [MRNA]</scope>
    <scope>DEVELOPMENTAL STAGE</scope>
</reference>
<name>FGFR4_COTCO</name>
<feature type="signal peptide" evidence="3">
    <location>
        <begin position="1"/>
        <end position="20"/>
    </location>
</feature>
<feature type="chain" id="PRO_0000249207" description="Fibroblast growth factor receptor 4">
    <location>
        <begin position="21"/>
        <end position="713"/>
    </location>
</feature>
<feature type="topological domain" description="Extracellular" evidence="3">
    <location>
        <begin position="21"/>
        <end position="281"/>
    </location>
</feature>
<feature type="transmembrane region" description="Helical" evidence="3">
    <location>
        <begin position="282"/>
        <end position="302"/>
    </location>
</feature>
<feature type="topological domain" description="Cytoplasmic" evidence="3">
    <location>
        <begin position="303"/>
        <end position="713"/>
    </location>
</feature>
<feature type="domain" description="Ig-like C2-type 1">
    <location>
        <begin position="59"/>
        <end position="152"/>
    </location>
</feature>
<feature type="domain" description="Ig-like C2-type 2">
    <location>
        <begin position="161"/>
        <end position="261"/>
    </location>
</feature>
<feature type="domain" description="Protein kinase" evidence="5">
    <location>
        <begin position="379"/>
        <end position="667"/>
    </location>
</feature>
<feature type="region of interest" description="Disordered" evidence="7">
    <location>
        <begin position="21"/>
        <end position="54"/>
    </location>
</feature>
<feature type="compositionally biased region" description="Basic and acidic residues" evidence="7">
    <location>
        <begin position="42"/>
        <end position="54"/>
    </location>
</feature>
<feature type="active site" description="Proton acceptor" evidence="5 6">
    <location>
        <position position="524"/>
    </location>
</feature>
<feature type="binding site" evidence="5">
    <location>
        <begin position="385"/>
        <end position="393"/>
    </location>
    <ligand>
        <name>ATP</name>
        <dbReference type="ChEBI" id="CHEBI:30616"/>
    </ligand>
</feature>
<feature type="binding site" evidence="5">
    <location>
        <position position="415"/>
    </location>
    <ligand>
        <name>ATP</name>
        <dbReference type="ChEBI" id="CHEBI:30616"/>
    </ligand>
</feature>
<feature type="modified residue" description="Phosphotyrosine; by autocatalysis" evidence="1">
    <location>
        <position position="554"/>
    </location>
</feature>
<feature type="modified residue" description="Phosphotyrosine; by autocatalysis" evidence="1">
    <location>
        <position position="555"/>
    </location>
</feature>
<feature type="modified residue" description="Phosphotyrosine; by autocatalysis" evidence="1">
    <location>
        <position position="666"/>
    </location>
</feature>
<feature type="glycosylation site" description="N-linked (GlcNAc...) asparagine" evidence="3">
    <location>
        <position position="133"/>
    </location>
</feature>
<feature type="glycosylation site" description="N-linked (GlcNAc...) asparagine" evidence="3">
    <location>
        <position position="170"/>
    </location>
</feature>
<feature type="glycosylation site" description="N-linked (GlcNAc...) asparagine" evidence="3">
    <location>
        <position position="202"/>
    </location>
</feature>
<feature type="glycosylation site" description="N-linked (GlcNAc...) asparagine" evidence="3">
    <location>
        <position position="223"/>
    </location>
</feature>
<feature type="glycosylation site" description="N-linked (GlcNAc...) asparagine" evidence="3">
    <location>
        <position position="234"/>
    </location>
</feature>
<feature type="disulfide bond" evidence="4">
    <location>
        <begin position="84"/>
        <end position="136"/>
    </location>
</feature>
<feature type="disulfide bond" evidence="4">
    <location>
        <begin position="183"/>
        <end position="245"/>
    </location>
</feature>
<sequence length="713" mass="80170">MLPLWLVLAGLLLAVGPAASHRGEMEPDSLASGDDDEDSDGDGPHGDRSEEPVYMHRAPYWTHPHRMDKKLYAVPAGNTVKFRCPASGSPSPSIRWFKNGREFRGEHRIGGIRLRHQHWSLVMESVVPSDRGNYTCLVENRFGRIRYSYLLDVLERSPHRPILQAGLPANTTALVGSDVEFFCKVYSDAQPHLQWLKHIEVNGSSYGPDGVPYVQVLKTADINSSEVEVLYLRNVTMEDAGEYTCLAGNSIGLSYQSAWLTVLPEEELVHEAETSEAKYTDIIIYTSGSLAVAMALIIVVLCRMQTQSSKQPLEPMAVHKLSKFPLIRQFSLDSSSSGKSSTSLMRVTRLSSSCAPMLAGVVEMDLPLDSKWEFPREKLVLGKPLGEGCFGQVVRAEAYGIDRQWPDRAVTVAVKMLKDNATDKDLADLISEMEMMKLMDKHKNIINLLGVCTQDGPLYVIVEFAAKGNLREYLRARRPPTPDYTFDITELHEEQLCFKDLVSCVYQVARGMEYLESRRCIHRDLAARNVLVTAENVMKIADFGLARDVHDIDYYKKTSNGRLPVKWMAPEALFDRVYTHQSDVWSFGILMWEIFTLGGSPYPGIPVEELFKLLKEGHRMDCPSNCTHELYMLMRECWHAVPLQRPTFKQLVEGLDKILAAISEEYLDLSMPFEQYSPSCEDTTSTCSSDDSVFTHDPMPLAPCLFSCPSGRT</sequence>
<comment type="function">
    <text evidence="1">Tyrosine-protein kinase that acts as a cell-surface receptor for fibroblast growth factors and plays a role in the regulation of cell proliferation, differentiation and migration, and in regulation of lipid metabolism, bile acid biosynthesis, glucose uptake, vitamin D metabolism and phosphate homeostasis. Required for normal down-regulation of the expression of CYP7A1, the rate-limiting enzyme in bile acid synthesis, in response to FGF19. Phosphorylates PLCG1 and FRS2. Ligand binding leads to the activation of several signaling cascades. Activation of PLCG1 leads to the production of the cellular signaling molecules diacylglycerol and inositol 1,4,5-trisphosphate. Phosphorylation of FRS2 triggers recruitment of GRB2, GAB1, PIK3R1 and SOS1, and mediates activation of RAS, MAPK1/ERK2, MAPK3/ERK1 and the MAP kinase signaling pathway, as well as of the AKT1 signaling pathway. Promotes SRC-dependent phosphorylation of the matrix protease MMP14 and its lysosomal degradation. FGFR4 signaling is down-regulated by receptor internalization and degradation; MMP14 promotes internalization and degradation of FGFR4 (By similarity).</text>
</comment>
<comment type="catalytic activity">
    <reaction evidence="6">
        <text>L-tyrosyl-[protein] + ATP = O-phospho-L-tyrosyl-[protein] + ADP + H(+)</text>
        <dbReference type="Rhea" id="RHEA:10596"/>
        <dbReference type="Rhea" id="RHEA-COMP:10136"/>
        <dbReference type="Rhea" id="RHEA-COMP:20101"/>
        <dbReference type="ChEBI" id="CHEBI:15378"/>
        <dbReference type="ChEBI" id="CHEBI:30616"/>
        <dbReference type="ChEBI" id="CHEBI:46858"/>
        <dbReference type="ChEBI" id="CHEBI:61978"/>
        <dbReference type="ChEBI" id="CHEBI:456216"/>
        <dbReference type="EC" id="2.7.10.1"/>
    </reaction>
</comment>
<comment type="activity regulation">
    <text evidence="1">Present in an inactive conformation in the absence of bound ligand. Ligand binding leads to dimerization and activation by autophosphorylation on tyrosine residues (By similarity).</text>
</comment>
<comment type="subunit">
    <text evidence="2">Monomer. Homodimer after ligand binding. Interacts with FGF1, FGF2, FGF4, FGF6, FGF8, FGF9, FGF16, FGF17, FGF18, FGF19, FGF21 and FGF23 (in vitro). Binding affinity for FGF family members is enhanced by interactions between FGFs and heparan sulfate proteoglycans. Interacts with KLB; this strongly increases the affinity for FGF19 and FGF23. Affinity for FGF19 is strongly increased by KLB and sulfated glycosaminoglycans. KLB and KL both interact with the core-glycosylated FGFR4 in the endoplasmic reticulum and promote its degradation, so that only FGFR4 with fully mature N-glycans is expressed at the cell surface. Identified in a complex with NCAM1, CDH2, PLCG1, FRS2, SRC, SHC1, GAP43 and CTTN. Interacts with MMP14 and HIP1. Interacts with STAT3 (By similarity).</text>
</comment>
<comment type="subcellular location">
    <subcellularLocation>
        <location evidence="1">Cell membrane</location>
        <topology evidence="1">Single-pass type I membrane protein</topology>
    </subcellularLocation>
    <subcellularLocation>
        <location evidence="1">Endosome</location>
    </subcellularLocation>
    <subcellularLocation>
        <location evidence="1">Endoplasmic reticulum</location>
    </subcellularLocation>
    <text evidence="1">Internalized from the cell membrane to recycling endosomes, and from there back to the cell membrane.</text>
</comment>
<comment type="developmental stage">
    <text evidence="8">During elongating primitive streak stages, it is expressed in the rostral and lateral epiblast and in the Hensen's node. From 2.5 days of development (2.5 dpc) on, it is expressed in various ectoderm- and mesoderm-derived structures. In the skeletal muscle lineage, it is highly expressed in the early myotome and, at later stages, in all skeletal muscles of the embryo. From 9 dpc to hatching, expression in the muscles decreases dramatically but is maintained in satellite cells of adult muscles.</text>
</comment>
<comment type="PTM">
    <text evidence="1">N-glycosylated. Full maturation of the glycan chains in the Golgi is essential for high affinity interaction with FGF19 (By similarity).</text>
</comment>
<comment type="PTM">
    <text evidence="1">Ubiquitinated. Subject to proteasomal degradation when not fully glycosylated (By similarity).</text>
</comment>
<comment type="PTM">
    <text evidence="1">Autophosphorylated. Binding of FGF family members together with heparan sulfate proteoglycan or heparin promotes receptor dimerization and autophosphorylation on tyrosine residues. Autophosphorylation occurs in trans between the two FGFR molecules present in the dimer (By similarity).</text>
</comment>
<comment type="similarity">
    <text evidence="5">Belongs to the protein kinase superfamily. Tyr protein kinase family. Fibroblast growth factor receptor subfamily.</text>
</comment>
<evidence type="ECO:0000250" key="1"/>
<evidence type="ECO:0000250" key="2">
    <source>
        <dbReference type="UniProtKB" id="P22455"/>
    </source>
</evidence>
<evidence type="ECO:0000255" key="3"/>
<evidence type="ECO:0000255" key="4">
    <source>
        <dbReference type="PROSITE-ProRule" id="PRU00114"/>
    </source>
</evidence>
<evidence type="ECO:0000255" key="5">
    <source>
        <dbReference type="PROSITE-ProRule" id="PRU00159"/>
    </source>
</evidence>
<evidence type="ECO:0000255" key="6">
    <source>
        <dbReference type="PROSITE-ProRule" id="PRU10028"/>
    </source>
</evidence>
<evidence type="ECO:0000256" key="7">
    <source>
        <dbReference type="SAM" id="MobiDB-lite"/>
    </source>
</evidence>
<evidence type="ECO:0000269" key="8">
    <source>
    </source>
</evidence>
<proteinExistence type="evidence at transcript level"/>
<protein>
    <recommendedName>
        <fullName>Fibroblast growth factor receptor 4</fullName>
        <shortName>FGFR-4</shortName>
        <ecNumber>2.7.10.1</ecNumber>
    </recommendedName>
    <alternativeName>
        <fullName>Fibroblast growth factor receptor-like embryonic kinase</fullName>
    </alternativeName>
</protein>
<gene>
    <name type="primary">FGFR4</name>
    <name type="synonym">FREK</name>
</gene>
<keyword id="KW-0067">ATP-binding</keyword>
<keyword id="KW-1003">Cell membrane</keyword>
<keyword id="KW-1015">Disulfide bond</keyword>
<keyword id="KW-0256">Endoplasmic reticulum</keyword>
<keyword id="KW-0967">Endosome</keyword>
<keyword id="KW-0325">Glycoprotein</keyword>
<keyword id="KW-0393">Immunoglobulin domain</keyword>
<keyword id="KW-0418">Kinase</keyword>
<keyword id="KW-0472">Membrane</keyword>
<keyword id="KW-0547">Nucleotide-binding</keyword>
<keyword id="KW-0597">Phosphoprotein</keyword>
<keyword id="KW-0675">Receptor</keyword>
<keyword id="KW-0677">Repeat</keyword>
<keyword id="KW-0732">Signal</keyword>
<keyword id="KW-0808">Transferase</keyword>
<keyword id="KW-0812">Transmembrane</keyword>
<keyword id="KW-1133">Transmembrane helix</keyword>
<keyword id="KW-0829">Tyrosine-protein kinase</keyword>
<keyword id="KW-0832">Ubl conjugation</keyword>
<organism>
    <name type="scientific">Coturnix coturnix</name>
    <name type="common">Common quail</name>
    <name type="synonym">Tetrao coturnix</name>
    <dbReference type="NCBI Taxonomy" id="9091"/>
    <lineage>
        <taxon>Eukaryota</taxon>
        <taxon>Metazoa</taxon>
        <taxon>Chordata</taxon>
        <taxon>Craniata</taxon>
        <taxon>Vertebrata</taxon>
        <taxon>Euteleostomi</taxon>
        <taxon>Archelosauria</taxon>
        <taxon>Archosauria</taxon>
        <taxon>Dinosauria</taxon>
        <taxon>Saurischia</taxon>
        <taxon>Theropoda</taxon>
        <taxon>Coelurosauria</taxon>
        <taxon>Aves</taxon>
        <taxon>Neognathae</taxon>
        <taxon>Galloanserae</taxon>
        <taxon>Galliformes</taxon>
        <taxon>Phasianidae</taxon>
        <taxon>Perdicinae</taxon>
        <taxon>Coturnix</taxon>
    </lineage>
</organism>
<accession>Q90330</accession>